<reference key="1">
    <citation type="journal article" date="2004" name="Nature">
        <title>Genome evolution in yeasts.</title>
        <authorList>
            <person name="Dujon B."/>
            <person name="Sherman D."/>
            <person name="Fischer G."/>
            <person name="Durrens P."/>
            <person name="Casaregola S."/>
            <person name="Lafontaine I."/>
            <person name="de Montigny J."/>
            <person name="Marck C."/>
            <person name="Neuveglise C."/>
            <person name="Talla E."/>
            <person name="Goffard N."/>
            <person name="Frangeul L."/>
            <person name="Aigle M."/>
            <person name="Anthouard V."/>
            <person name="Babour A."/>
            <person name="Barbe V."/>
            <person name="Barnay S."/>
            <person name="Blanchin S."/>
            <person name="Beckerich J.-M."/>
            <person name="Beyne E."/>
            <person name="Bleykasten C."/>
            <person name="Boisrame A."/>
            <person name="Boyer J."/>
            <person name="Cattolico L."/>
            <person name="Confanioleri F."/>
            <person name="de Daruvar A."/>
            <person name="Despons L."/>
            <person name="Fabre E."/>
            <person name="Fairhead C."/>
            <person name="Ferry-Dumazet H."/>
            <person name="Groppi A."/>
            <person name="Hantraye F."/>
            <person name="Hennequin C."/>
            <person name="Jauniaux N."/>
            <person name="Joyet P."/>
            <person name="Kachouri R."/>
            <person name="Kerrest A."/>
            <person name="Koszul R."/>
            <person name="Lemaire M."/>
            <person name="Lesur I."/>
            <person name="Ma L."/>
            <person name="Muller H."/>
            <person name="Nicaud J.-M."/>
            <person name="Nikolski M."/>
            <person name="Oztas S."/>
            <person name="Ozier-Kalogeropoulos O."/>
            <person name="Pellenz S."/>
            <person name="Potier S."/>
            <person name="Richard G.-F."/>
            <person name="Straub M.-L."/>
            <person name="Suleau A."/>
            <person name="Swennen D."/>
            <person name="Tekaia F."/>
            <person name="Wesolowski-Louvel M."/>
            <person name="Westhof E."/>
            <person name="Wirth B."/>
            <person name="Zeniou-Meyer M."/>
            <person name="Zivanovic Y."/>
            <person name="Bolotin-Fukuhara M."/>
            <person name="Thierry A."/>
            <person name="Bouchier C."/>
            <person name="Caudron B."/>
            <person name="Scarpelli C."/>
            <person name="Gaillardin C."/>
            <person name="Weissenbach J."/>
            <person name="Wincker P."/>
            <person name="Souciet J.-L."/>
        </authorList>
    </citation>
    <scope>NUCLEOTIDE SEQUENCE [LARGE SCALE GENOMIC DNA]</scope>
    <source>
        <strain>ATCC 36239 / CBS 767 / BCRC 21394 / JCM 1990 / NBRC 0083 / IGC 2968</strain>
    </source>
</reference>
<comment type="function">
    <text evidence="1">RNA-binding component of the eukaryotic translation initiation factor 3 (eIF-3) complex, which is involved in protein synthesis of a specialized repertoire of mRNAs and, together with other initiation factors, stimulates binding of mRNA and methionyl-tRNAi to the 40S ribosome. The eIF-3 complex specifically targets and initiates translation of a subset of mRNAs involved in cell proliferation. This subunit can bind 18S rRNA.</text>
</comment>
<comment type="subunit">
    <text evidence="1">Component of the eukaryotic translation initiation factor 3 (eIF-3) complex.</text>
</comment>
<comment type="subcellular location">
    <subcellularLocation>
        <location evidence="1">Cytoplasm</location>
    </subcellularLocation>
</comment>
<comment type="similarity">
    <text evidence="1">Belongs to the eIF-3 subunit G family.</text>
</comment>
<proteinExistence type="inferred from homology"/>
<evidence type="ECO:0000255" key="1">
    <source>
        <dbReference type="HAMAP-Rule" id="MF_03006"/>
    </source>
</evidence>
<organism>
    <name type="scientific">Debaryomyces hansenii (strain ATCC 36239 / CBS 767 / BCRC 21394 / JCM 1990 / NBRC 0083 / IGC 2968)</name>
    <name type="common">Yeast</name>
    <name type="synonym">Torulaspora hansenii</name>
    <dbReference type="NCBI Taxonomy" id="284592"/>
    <lineage>
        <taxon>Eukaryota</taxon>
        <taxon>Fungi</taxon>
        <taxon>Dikarya</taxon>
        <taxon>Ascomycota</taxon>
        <taxon>Saccharomycotina</taxon>
        <taxon>Pichiomycetes</taxon>
        <taxon>Debaryomycetaceae</taxon>
        <taxon>Debaryomyces</taxon>
    </lineage>
</organism>
<feature type="chain" id="PRO_0000365443" description="Eukaryotic translation initiation factor 3 subunit G">
    <location>
        <begin position="1"/>
        <end position="276"/>
    </location>
</feature>
<feature type="domain" description="RRM" evidence="1">
    <location>
        <begin position="195"/>
        <end position="274"/>
    </location>
</feature>
<feature type="modified residue" description="Phosphoserine" evidence="1">
    <location>
        <position position="148"/>
    </location>
</feature>
<sequence length="276" mass="30972">MSASVIKSWADAEDEIPTPEITTNPDGTKTVVSYRLNANGQKVKITQKIKEVKVKEKVHPLIAQRKNWAKYGKEKNTPPGPDTRTTQLGEKVELKLGTSWKEIEKQEEESKEEQKAQLVSTQRIKCRTCGGDHFTSKCPFKDTLISDSTDASNAATPEPADDGMNAPGKYVPRHLRKDANGNMPAKDLKDRDDSTTLKISQLNSIVDEDMLRNELLGRYGPFQRAIVVRNRETGESRGFAYVTFATESKAEEALNDLNGKGYHSLILHLEWSKKRK</sequence>
<name>EIF3G_DEBHA</name>
<keyword id="KW-0963">Cytoplasm</keyword>
<keyword id="KW-0396">Initiation factor</keyword>
<keyword id="KW-0597">Phosphoprotein</keyword>
<keyword id="KW-0648">Protein biosynthesis</keyword>
<keyword id="KW-1185">Reference proteome</keyword>
<keyword id="KW-0694">RNA-binding</keyword>
<gene>
    <name evidence="1" type="primary">TIF35</name>
    <name type="ordered locus">DEHA2D04444g</name>
</gene>
<accession>Q6BT10</accession>
<dbReference type="EMBL" id="CR382136">
    <property type="protein sequence ID" value="CAG86799.1"/>
    <property type="molecule type" value="Genomic_DNA"/>
</dbReference>
<dbReference type="RefSeq" id="XP_458660.1">
    <property type="nucleotide sequence ID" value="XM_458660.1"/>
</dbReference>
<dbReference type="SMR" id="Q6BT10"/>
<dbReference type="FunCoup" id="Q6BT10">
    <property type="interactions" value="1141"/>
</dbReference>
<dbReference type="STRING" id="284592.Q6BT10"/>
<dbReference type="GeneID" id="2901259"/>
<dbReference type="KEGG" id="dha:DEHA2D04444g"/>
<dbReference type="VEuPathDB" id="FungiDB:DEHA2D04444g"/>
<dbReference type="eggNOG" id="KOG0122">
    <property type="taxonomic scope" value="Eukaryota"/>
</dbReference>
<dbReference type="HOGENOM" id="CLU_034595_0_0_1"/>
<dbReference type="InParanoid" id="Q6BT10"/>
<dbReference type="OMA" id="ICQGDHF"/>
<dbReference type="OrthoDB" id="639027at2759"/>
<dbReference type="Proteomes" id="UP000000599">
    <property type="component" value="Chromosome D"/>
</dbReference>
<dbReference type="GO" id="GO:0016282">
    <property type="term" value="C:eukaryotic 43S preinitiation complex"/>
    <property type="evidence" value="ECO:0007669"/>
    <property type="project" value="UniProtKB-UniRule"/>
</dbReference>
<dbReference type="GO" id="GO:0033290">
    <property type="term" value="C:eukaryotic 48S preinitiation complex"/>
    <property type="evidence" value="ECO:0007669"/>
    <property type="project" value="UniProtKB-UniRule"/>
</dbReference>
<dbReference type="GO" id="GO:0071540">
    <property type="term" value="C:eukaryotic translation initiation factor 3 complex, eIF3e"/>
    <property type="evidence" value="ECO:0007669"/>
    <property type="project" value="EnsemblFungi"/>
</dbReference>
<dbReference type="GO" id="GO:0071541">
    <property type="term" value="C:eukaryotic translation initiation factor 3 complex, eIF3m"/>
    <property type="evidence" value="ECO:0007669"/>
    <property type="project" value="EnsemblFungi"/>
</dbReference>
<dbReference type="GO" id="GO:0043614">
    <property type="term" value="C:multi-eIF complex"/>
    <property type="evidence" value="ECO:0007669"/>
    <property type="project" value="EnsemblFungi"/>
</dbReference>
<dbReference type="GO" id="GO:0003723">
    <property type="term" value="F:RNA binding"/>
    <property type="evidence" value="ECO:0007669"/>
    <property type="project" value="UniProtKB-UniRule"/>
</dbReference>
<dbReference type="GO" id="GO:0003743">
    <property type="term" value="F:translation initiation factor activity"/>
    <property type="evidence" value="ECO:0007669"/>
    <property type="project" value="UniProtKB-UniRule"/>
</dbReference>
<dbReference type="GO" id="GO:0001732">
    <property type="term" value="P:formation of cytoplasmic translation initiation complex"/>
    <property type="evidence" value="ECO:0007669"/>
    <property type="project" value="UniProtKB-UniRule"/>
</dbReference>
<dbReference type="GO" id="GO:0002188">
    <property type="term" value="P:translation reinitiation"/>
    <property type="evidence" value="ECO:0007669"/>
    <property type="project" value="EnsemblFungi"/>
</dbReference>
<dbReference type="GO" id="GO:0006415">
    <property type="term" value="P:translational termination"/>
    <property type="evidence" value="ECO:0007669"/>
    <property type="project" value="EnsemblFungi"/>
</dbReference>
<dbReference type="CDD" id="cd12933">
    <property type="entry name" value="eIF3G"/>
    <property type="match status" value="1"/>
</dbReference>
<dbReference type="CDD" id="cd12408">
    <property type="entry name" value="RRM_eIF3G_like"/>
    <property type="match status" value="1"/>
</dbReference>
<dbReference type="Gene3D" id="3.30.70.330">
    <property type="match status" value="1"/>
</dbReference>
<dbReference type="HAMAP" id="MF_03006">
    <property type="entry name" value="eIF3g"/>
    <property type="match status" value="1"/>
</dbReference>
<dbReference type="InterPro" id="IPR017334">
    <property type="entry name" value="eIF3_g"/>
</dbReference>
<dbReference type="InterPro" id="IPR024675">
    <property type="entry name" value="eIF3g_N"/>
</dbReference>
<dbReference type="InterPro" id="IPR034240">
    <property type="entry name" value="eIF3G_RRM"/>
</dbReference>
<dbReference type="InterPro" id="IPR012677">
    <property type="entry name" value="Nucleotide-bd_a/b_plait_sf"/>
</dbReference>
<dbReference type="InterPro" id="IPR035979">
    <property type="entry name" value="RBD_domain_sf"/>
</dbReference>
<dbReference type="InterPro" id="IPR000504">
    <property type="entry name" value="RRM_dom"/>
</dbReference>
<dbReference type="PANTHER" id="PTHR10352">
    <property type="entry name" value="EUKARYOTIC TRANSLATION INITIATION FACTOR 3 SUBUNIT G"/>
    <property type="match status" value="1"/>
</dbReference>
<dbReference type="Pfam" id="PF12353">
    <property type="entry name" value="eIF3g"/>
    <property type="match status" value="1"/>
</dbReference>
<dbReference type="Pfam" id="PF00076">
    <property type="entry name" value="RRM_1"/>
    <property type="match status" value="1"/>
</dbReference>
<dbReference type="PIRSF" id="PIRSF037949">
    <property type="entry name" value="Transl_init_eIF-3_RNA-bind"/>
    <property type="match status" value="1"/>
</dbReference>
<dbReference type="SMART" id="SM00360">
    <property type="entry name" value="RRM"/>
    <property type="match status" value="1"/>
</dbReference>
<dbReference type="SUPFAM" id="SSF54928">
    <property type="entry name" value="RNA-binding domain, RBD"/>
    <property type="match status" value="1"/>
</dbReference>
<dbReference type="PROSITE" id="PS50102">
    <property type="entry name" value="RRM"/>
    <property type="match status" value="1"/>
</dbReference>
<protein>
    <recommendedName>
        <fullName evidence="1">Eukaryotic translation initiation factor 3 subunit G</fullName>
        <shortName evidence="1">eIF3g</shortName>
    </recommendedName>
    <alternativeName>
        <fullName evidence="1">Eukaryotic translation initiation factor 3 RNA-binding subunit</fullName>
        <shortName evidence="1">eIF-3 RNA-binding subunit</shortName>
    </alternativeName>
    <alternativeName>
        <fullName evidence="1">Translation initiation factor eIF3 p33 subunit homolog</fullName>
        <shortName evidence="1">eIF3 p33 homolog</shortName>
    </alternativeName>
</protein>